<comment type="function">
    <text evidence="1">Proton-coupled chloride transporter. Functions as antiport system and exchanges two chloride ions for 1 proton. Probably acts as an electrical shunt for an outwardly-directed proton pump that is linked to amino acid decarboxylation, as part of the extreme acid resistance (XAR) response.</text>
</comment>
<comment type="catalytic activity">
    <reaction evidence="1">
        <text>2 chloride(in) + H(+)(out) = 2 chloride(out) + H(+)(in)</text>
        <dbReference type="Rhea" id="RHEA:29567"/>
        <dbReference type="ChEBI" id="CHEBI:15378"/>
        <dbReference type="ChEBI" id="CHEBI:17996"/>
    </reaction>
</comment>
<comment type="subunit">
    <text evidence="1">Homodimer.</text>
</comment>
<comment type="subcellular location">
    <subcellularLocation>
        <location evidence="1">Cell inner membrane</location>
        <topology evidence="1">Multi-pass membrane protein</topology>
    </subcellularLocation>
</comment>
<comment type="similarity">
    <text evidence="1">Belongs to the chloride channel (TC 2.A.49) family. ClcA subfamily.</text>
</comment>
<protein>
    <recommendedName>
        <fullName evidence="1">H(+)/Cl(-) exchange transporter ClcA</fullName>
    </recommendedName>
</protein>
<dbReference type="EMBL" id="CP000886">
    <property type="protein sequence ID" value="ABX65703.1"/>
    <property type="molecule type" value="Genomic_DNA"/>
</dbReference>
<dbReference type="RefSeq" id="WP_000845439.1">
    <property type="nucleotide sequence ID" value="NC_010102.1"/>
</dbReference>
<dbReference type="SMR" id="A9N0Q1"/>
<dbReference type="KEGG" id="spq:SPAB_00261"/>
<dbReference type="PATRIC" id="fig|1016998.12.peg.253"/>
<dbReference type="HOGENOM" id="CLU_015263_7_0_6"/>
<dbReference type="BioCyc" id="SENT1016998:SPAB_RS01055-MONOMER"/>
<dbReference type="Proteomes" id="UP000008556">
    <property type="component" value="Chromosome"/>
</dbReference>
<dbReference type="GO" id="GO:0005886">
    <property type="term" value="C:plasma membrane"/>
    <property type="evidence" value="ECO:0007669"/>
    <property type="project" value="UniProtKB-SubCell"/>
</dbReference>
<dbReference type="GO" id="GO:0015297">
    <property type="term" value="F:antiporter activity"/>
    <property type="evidence" value="ECO:0007669"/>
    <property type="project" value="UniProtKB-UniRule"/>
</dbReference>
<dbReference type="GO" id="GO:0005247">
    <property type="term" value="F:voltage-gated chloride channel activity"/>
    <property type="evidence" value="ECO:0007669"/>
    <property type="project" value="TreeGrafter"/>
</dbReference>
<dbReference type="CDD" id="cd01031">
    <property type="entry name" value="EriC"/>
    <property type="match status" value="1"/>
</dbReference>
<dbReference type="FunFam" id="1.10.3080.10:FF:000005">
    <property type="entry name" value="H(+)/Cl(-) exchange transporter ClcA"/>
    <property type="match status" value="1"/>
</dbReference>
<dbReference type="Gene3D" id="1.10.3080.10">
    <property type="entry name" value="Clc chloride channel"/>
    <property type="match status" value="1"/>
</dbReference>
<dbReference type="HAMAP" id="MF_01128">
    <property type="entry name" value="CLC_ClcA"/>
    <property type="match status" value="1"/>
</dbReference>
<dbReference type="InterPro" id="IPR023861">
    <property type="entry name" value="Cl-channel_ClcA"/>
</dbReference>
<dbReference type="InterPro" id="IPR014743">
    <property type="entry name" value="Cl-channel_core"/>
</dbReference>
<dbReference type="InterPro" id="IPR001807">
    <property type="entry name" value="ClC"/>
</dbReference>
<dbReference type="NCBIfam" id="NF003640">
    <property type="entry name" value="PRK05277.1"/>
    <property type="match status" value="1"/>
</dbReference>
<dbReference type="PANTHER" id="PTHR45711">
    <property type="entry name" value="CHLORIDE CHANNEL PROTEIN"/>
    <property type="match status" value="1"/>
</dbReference>
<dbReference type="PANTHER" id="PTHR45711:SF6">
    <property type="entry name" value="CHLORIDE CHANNEL PROTEIN"/>
    <property type="match status" value="1"/>
</dbReference>
<dbReference type="Pfam" id="PF00654">
    <property type="entry name" value="Voltage_CLC"/>
    <property type="match status" value="1"/>
</dbReference>
<dbReference type="PRINTS" id="PR00762">
    <property type="entry name" value="CLCHANNEL"/>
</dbReference>
<dbReference type="SUPFAM" id="SSF81340">
    <property type="entry name" value="Clc chloride channel"/>
    <property type="match status" value="1"/>
</dbReference>
<organism>
    <name type="scientific">Salmonella paratyphi B (strain ATCC BAA-1250 / SPB7)</name>
    <dbReference type="NCBI Taxonomy" id="1016998"/>
    <lineage>
        <taxon>Bacteria</taxon>
        <taxon>Pseudomonadati</taxon>
        <taxon>Pseudomonadota</taxon>
        <taxon>Gammaproteobacteria</taxon>
        <taxon>Enterobacterales</taxon>
        <taxon>Enterobacteriaceae</taxon>
        <taxon>Salmonella</taxon>
    </lineage>
</organism>
<evidence type="ECO:0000255" key="1">
    <source>
        <dbReference type="HAMAP-Rule" id="MF_01128"/>
    </source>
</evidence>
<keyword id="KW-0050">Antiport</keyword>
<keyword id="KW-0997">Cell inner membrane</keyword>
<keyword id="KW-1003">Cell membrane</keyword>
<keyword id="KW-0868">Chloride</keyword>
<keyword id="KW-0406">Ion transport</keyword>
<keyword id="KW-0472">Membrane</keyword>
<keyword id="KW-0812">Transmembrane</keyword>
<keyword id="KW-1133">Transmembrane helix</keyword>
<keyword id="KW-0813">Transport</keyword>
<proteinExistence type="inferred from homology"/>
<gene>
    <name evidence="1" type="primary">clcA</name>
    <name evidence="1" type="synonym">eriC</name>
    <name type="ordered locus">SPAB_00261</name>
</gene>
<reference key="1">
    <citation type="submission" date="2007-11" db="EMBL/GenBank/DDBJ databases">
        <authorList>
            <consortium name="The Salmonella enterica serovar Paratyphi B Genome Sequencing Project"/>
            <person name="McClelland M."/>
            <person name="Sanderson E.K."/>
            <person name="Porwollik S."/>
            <person name="Spieth J."/>
            <person name="Clifton W.S."/>
            <person name="Fulton R."/>
            <person name="Cordes M."/>
            <person name="Wollam A."/>
            <person name="Shah N."/>
            <person name="Pepin K."/>
            <person name="Bhonagiri V."/>
            <person name="Nash W."/>
            <person name="Johnson M."/>
            <person name="Thiruvilangam P."/>
            <person name="Wilson R."/>
        </authorList>
    </citation>
    <scope>NUCLEOTIDE SEQUENCE [LARGE SCALE GENOMIC DNA]</scope>
    <source>
        <strain>ATCC BAA-1250 / SPB7</strain>
    </source>
</reference>
<feature type="chain" id="PRO_1000085020" description="H(+)/Cl(-) exchange transporter ClcA">
    <location>
        <begin position="1"/>
        <end position="473"/>
    </location>
</feature>
<feature type="topological domain" description="Cytoplasmic" evidence="1">
    <location>
        <begin position="1"/>
        <end position="32"/>
    </location>
</feature>
<feature type="transmembrane region" description="Helical" evidence="1">
    <location>
        <begin position="33"/>
        <end position="69"/>
    </location>
</feature>
<feature type="topological domain" description="Periplasmic" evidence="1">
    <location>
        <begin position="70"/>
        <end position="76"/>
    </location>
</feature>
<feature type="transmembrane region" description="Helical" evidence="1">
    <location>
        <begin position="77"/>
        <end position="100"/>
    </location>
</feature>
<feature type="intramembrane region" description="Helical" evidence="1">
    <location>
        <begin position="109"/>
        <end position="116"/>
    </location>
</feature>
<feature type="topological domain" description="Cytoplasmic" evidence="1">
    <location>
        <begin position="117"/>
        <end position="123"/>
    </location>
</feature>
<feature type="transmembrane region" description="Helical" evidence="1">
    <location>
        <begin position="124"/>
        <end position="141"/>
    </location>
</feature>
<feature type="transmembrane region" description="Helical" evidence="1">
    <location>
        <begin position="148"/>
        <end position="166"/>
    </location>
</feature>
<feature type="topological domain" description="Cytoplasmic" evidence="1">
    <location>
        <begin position="167"/>
        <end position="176"/>
    </location>
</feature>
<feature type="intramembrane region" description="Helical" evidence="1">
    <location>
        <begin position="177"/>
        <end position="189"/>
    </location>
</feature>
<feature type="intramembrane region" description="Helical" evidence="1">
    <location>
        <begin position="193"/>
        <end position="201"/>
    </location>
</feature>
<feature type="topological domain" description="Cytoplasmic" evidence="1">
    <location>
        <begin position="202"/>
        <end position="214"/>
    </location>
</feature>
<feature type="transmembrane region" description="Helical" evidence="1">
    <location>
        <begin position="215"/>
        <end position="232"/>
    </location>
</feature>
<feature type="topological domain" description="Periplasmic" evidence="1">
    <location>
        <begin position="233"/>
        <end position="252"/>
    </location>
</feature>
<feature type="transmembrane region" description="Helical" evidence="1">
    <location>
        <begin position="253"/>
        <end position="281"/>
    </location>
</feature>
<feature type="topological domain" description="Cytoplasmic" evidence="1">
    <location>
        <begin position="282"/>
        <end position="287"/>
    </location>
</feature>
<feature type="transmembrane region" description="Helical" evidence="1">
    <location>
        <begin position="288"/>
        <end position="309"/>
    </location>
</feature>
<feature type="topological domain" description="Periplasmic" evidence="1">
    <location>
        <begin position="310"/>
        <end position="329"/>
    </location>
</feature>
<feature type="transmembrane region" description="Helical" evidence="1">
    <location>
        <begin position="330"/>
        <end position="349"/>
    </location>
</feature>
<feature type="transmembrane region" description="Helical" evidence="1">
    <location>
        <begin position="355"/>
        <end position="376"/>
    </location>
</feature>
<feature type="topological domain" description="Periplasmic" evidence="1">
    <location>
        <begin position="377"/>
        <end position="386"/>
    </location>
</feature>
<feature type="intramembrane region" description="Helical" evidence="1">
    <location>
        <begin position="387"/>
        <end position="401"/>
    </location>
</feature>
<feature type="intramembrane region" description="Note=Loop between two helices" evidence="1">
    <location>
        <begin position="402"/>
        <end position="404"/>
    </location>
</feature>
<feature type="intramembrane region" description="Helical" evidence="1">
    <location>
        <begin position="405"/>
        <end position="416"/>
    </location>
</feature>
<feature type="intramembrane region" description="Note=Loop between two helices" evidence="1">
    <location>
        <begin position="417"/>
        <end position="421"/>
    </location>
</feature>
<feature type="transmembrane region" description="Helical" evidence="1">
    <location>
        <begin position="422"/>
        <end position="438"/>
    </location>
</feature>
<feature type="topological domain" description="Cytoplasmic" evidence="1">
    <location>
        <begin position="439"/>
        <end position="473"/>
    </location>
</feature>
<feature type="short sequence motif" description="Selectivity filter part_1" evidence="1">
    <location>
        <begin position="106"/>
        <end position="110"/>
    </location>
</feature>
<feature type="short sequence motif" description="Selectivity filter part_2" evidence="1">
    <location>
        <begin position="146"/>
        <end position="150"/>
    </location>
</feature>
<feature type="short sequence motif" description="Selectivity filter part_3" evidence="1">
    <location>
        <begin position="355"/>
        <end position="359"/>
    </location>
</feature>
<feature type="binding site" evidence="1">
    <location>
        <position position="107"/>
    </location>
    <ligand>
        <name>chloride</name>
        <dbReference type="ChEBI" id="CHEBI:17996"/>
    </ligand>
</feature>
<feature type="binding site" evidence="1">
    <location>
        <position position="356"/>
    </location>
    <ligand>
        <name>chloride</name>
        <dbReference type="ChEBI" id="CHEBI:17996"/>
    </ligand>
</feature>
<feature type="binding site" evidence="1">
    <location>
        <position position="357"/>
    </location>
    <ligand>
        <name>chloride</name>
        <dbReference type="ChEBI" id="CHEBI:17996"/>
    </ligand>
</feature>
<feature type="binding site" evidence="1">
    <location>
        <position position="445"/>
    </location>
    <ligand>
        <name>chloride</name>
        <dbReference type="ChEBI" id="CHEBI:17996"/>
    </ligand>
</feature>
<feature type="site" description="Mediates proton transfer from the outer aqueous phase to the interior of the protein; involved in linking H(+) and Cl(-) transport" evidence="1">
    <location>
        <position position="148"/>
    </location>
</feature>
<feature type="site" description="Mediates proton transfer from the protein to the inner aqueous phase" evidence="1">
    <location>
        <position position="203"/>
    </location>
</feature>
<name>CLCA_SALPB</name>
<accession>A9N0Q1</accession>
<sequence length="473" mass="50389">MKTDTSTFLAQQIVRLRRRDQIRRLMQRDKTPLAILLMAAVVGTLTGLVGVAFEKAVSWVQNMRIGALVQVADHAFLLWPLAFILSALLAMVGYFLVRKFAPEAGGSGIPEIEGALEELRPVRWWRVLPVKFIGGMGTLGAGMVLGREGPTVQIGGNLGRMVLDVFRMRSAEARHTLLATGAAAGLSAAFNAPLAGILFIIEEMRPQFRYNLISIKAVFTGVIMSSIVFRIFNGEAPIIEVGKLSDAPVNTLWLYLILGIIFGCVGPVFNSLVLRTQDMFQRFHGGEIKKWVLMGGAIGGLCGILGLIEPEAAGGGFNLIPIAAAGNFSVGLLLFIFITRVVTTLLCFSSGAPGGIFAPMLALGTLLGTAFGMAAAVLFPQYHLEAGTFAIAGMGALMAASVRAPLTGIVLVLEMTDNYQLILPMIITCLGATLLAQFLGGKPLYSTILARTLAKQDAEQAAKNQNAPAGENT</sequence>